<dbReference type="EC" id="2.5.1.10" evidence="3"/>
<dbReference type="EC" id="2.5.1.1" evidence="3"/>
<dbReference type="EMBL" id="KY014580">
    <property type="protein sequence ID" value="ARE72275.1"/>
    <property type="molecule type" value="mRNA"/>
</dbReference>
<dbReference type="EMBL" id="JAATIP010000185">
    <property type="protein sequence ID" value="KAF4362349.1"/>
    <property type="status" value="ALT_SEQ"/>
    <property type="molecule type" value="Genomic_DNA"/>
</dbReference>
<dbReference type="EMBL" id="JAATIQ010000060">
    <property type="protein sequence ID" value="KAF4391347.1"/>
    <property type="status" value="ALT_SEQ"/>
    <property type="molecule type" value="Genomic_DNA"/>
</dbReference>
<dbReference type="EMBL" id="UZAU01000678">
    <property type="status" value="NOT_ANNOTATED_CDS"/>
    <property type="molecule type" value="Genomic_DNA"/>
</dbReference>
<dbReference type="SMR" id="A0A1V0QSH7"/>
<dbReference type="UniPathway" id="UPA00259">
    <property type="reaction ID" value="UER00368"/>
</dbReference>
<dbReference type="UniPathway" id="UPA00260">
    <property type="reaction ID" value="UER00369"/>
</dbReference>
<dbReference type="Proteomes" id="UP000525078">
    <property type="component" value="Unassembled WGS sequence"/>
</dbReference>
<dbReference type="Proteomes" id="UP000583929">
    <property type="component" value="Unassembled WGS sequence"/>
</dbReference>
<dbReference type="Proteomes" id="UP000596661">
    <property type="component" value="Chromosome 8"/>
</dbReference>
<dbReference type="GO" id="GO:0005737">
    <property type="term" value="C:cytoplasm"/>
    <property type="evidence" value="ECO:0007669"/>
    <property type="project" value="UniProtKB-SubCell"/>
</dbReference>
<dbReference type="GO" id="GO:0005634">
    <property type="term" value="C:nucleus"/>
    <property type="evidence" value="ECO:0007669"/>
    <property type="project" value="UniProtKB-SubCell"/>
</dbReference>
<dbReference type="GO" id="GO:0004337">
    <property type="term" value="F:(2E,6E)-farnesyl diphosphate synthase activity"/>
    <property type="evidence" value="ECO:0007669"/>
    <property type="project" value="TreeGrafter"/>
</dbReference>
<dbReference type="GO" id="GO:0004161">
    <property type="term" value="F:dimethylallyltranstransferase activity"/>
    <property type="evidence" value="ECO:0007669"/>
    <property type="project" value="TreeGrafter"/>
</dbReference>
<dbReference type="GO" id="GO:0046872">
    <property type="term" value="F:metal ion binding"/>
    <property type="evidence" value="ECO:0007669"/>
    <property type="project" value="UniProtKB-KW"/>
</dbReference>
<dbReference type="GO" id="GO:0006695">
    <property type="term" value="P:cholesterol biosynthetic process"/>
    <property type="evidence" value="ECO:0007669"/>
    <property type="project" value="UniProtKB-KW"/>
</dbReference>
<dbReference type="GO" id="GO:0045337">
    <property type="term" value="P:farnesyl diphosphate biosynthetic process"/>
    <property type="evidence" value="ECO:0007669"/>
    <property type="project" value="TreeGrafter"/>
</dbReference>
<dbReference type="CDD" id="cd00685">
    <property type="entry name" value="Trans_IPPS_HT"/>
    <property type="match status" value="1"/>
</dbReference>
<dbReference type="FunFam" id="1.10.600.10:FF:000008">
    <property type="entry name" value="Farnesyl pyrophosphate synthase"/>
    <property type="match status" value="1"/>
</dbReference>
<dbReference type="Gene3D" id="1.10.600.10">
    <property type="entry name" value="Farnesyl Diphosphate Synthase"/>
    <property type="match status" value="1"/>
</dbReference>
<dbReference type="InterPro" id="IPR039702">
    <property type="entry name" value="FPS1-like"/>
</dbReference>
<dbReference type="InterPro" id="IPR008949">
    <property type="entry name" value="Isoprenoid_synthase_dom_sf"/>
</dbReference>
<dbReference type="InterPro" id="IPR000092">
    <property type="entry name" value="Polyprenyl_synt"/>
</dbReference>
<dbReference type="InterPro" id="IPR033749">
    <property type="entry name" value="Polyprenyl_synt_CS"/>
</dbReference>
<dbReference type="PANTHER" id="PTHR11525:SF20">
    <property type="entry name" value="FARNESYL PYROPHOSPHATE SYNTHASE 1-LIKE ISOFORM X1"/>
    <property type="match status" value="1"/>
</dbReference>
<dbReference type="PANTHER" id="PTHR11525">
    <property type="entry name" value="FARNESYL-PYROPHOSPHATE SYNTHETASE"/>
    <property type="match status" value="1"/>
</dbReference>
<dbReference type="Pfam" id="PF00348">
    <property type="entry name" value="polyprenyl_synt"/>
    <property type="match status" value="1"/>
</dbReference>
<dbReference type="SFLD" id="SFLDS00005">
    <property type="entry name" value="Isoprenoid_Synthase_Type_I"/>
    <property type="match status" value="1"/>
</dbReference>
<dbReference type="SFLD" id="SFLDG01017">
    <property type="entry name" value="Polyprenyl_Transferase_Like"/>
    <property type="match status" value="1"/>
</dbReference>
<dbReference type="SUPFAM" id="SSF48576">
    <property type="entry name" value="Terpenoid synthases"/>
    <property type="match status" value="1"/>
</dbReference>
<dbReference type="PROSITE" id="PS00723">
    <property type="entry name" value="POLYPRENYL_SYNTHASE_1"/>
    <property type="match status" value="1"/>
</dbReference>
<dbReference type="PROSITE" id="PS00444">
    <property type="entry name" value="POLYPRENYL_SYNTHASE_2"/>
    <property type="match status" value="1"/>
</dbReference>
<comment type="function">
    <text evidence="3">Catalyzes the sequential condensation of isopentenyl pyrophosphate with the allylic pyrophosphates, dimethylallyl pyrophosphate, and then with the resultant geranylpyrophosphate to the ultimate product farnesyl pyrophosphate.</text>
</comment>
<comment type="catalytic activity">
    <reaction evidence="3">
        <text>isopentenyl diphosphate + dimethylallyl diphosphate = (2E)-geranyl diphosphate + diphosphate</text>
        <dbReference type="Rhea" id="RHEA:22408"/>
        <dbReference type="ChEBI" id="CHEBI:33019"/>
        <dbReference type="ChEBI" id="CHEBI:57623"/>
        <dbReference type="ChEBI" id="CHEBI:58057"/>
        <dbReference type="ChEBI" id="CHEBI:128769"/>
        <dbReference type="EC" id="2.5.1.1"/>
    </reaction>
    <physiologicalReaction direction="left-to-right" evidence="3">
        <dbReference type="Rhea" id="RHEA:22409"/>
    </physiologicalReaction>
</comment>
<comment type="catalytic activity">
    <reaction evidence="3">
        <text>isopentenyl diphosphate + (2E)-geranyl diphosphate = (2E,6E)-farnesyl diphosphate + diphosphate</text>
        <dbReference type="Rhea" id="RHEA:19361"/>
        <dbReference type="ChEBI" id="CHEBI:33019"/>
        <dbReference type="ChEBI" id="CHEBI:58057"/>
        <dbReference type="ChEBI" id="CHEBI:128769"/>
        <dbReference type="ChEBI" id="CHEBI:175763"/>
        <dbReference type="EC" id="2.5.1.10"/>
    </reaction>
    <physiologicalReaction direction="left-to-right" evidence="3">
        <dbReference type="Rhea" id="RHEA:19362"/>
    </physiologicalReaction>
</comment>
<comment type="cofactor">
    <cofactor evidence="4">
        <name>Mg(2+)</name>
        <dbReference type="ChEBI" id="CHEBI:18420"/>
    </cofactor>
    <text evidence="4">Binds 2 Mg(2+) ions per subunit.</text>
</comment>
<comment type="pathway">
    <text evidence="3">Isoprenoid biosynthesis; farnesyl diphosphate biosynthesis; farnesyl diphosphate from geranyl diphosphate and isopentenyl diphosphate: step 1/1.</text>
</comment>
<comment type="pathway">
    <text evidence="3">Sesquiterpene biosynthesis.</text>
</comment>
<comment type="pathway">
    <text evidence="3">Isoprenoid biosynthesis; geranyl diphosphate biosynthesis; geranyl diphosphate from dimethylallyl diphosphate and isopentenyl diphosphate: step 1/1.</text>
</comment>
<comment type="subcellular location">
    <subcellularLocation>
        <location evidence="1">Cytoplasm</location>
    </subcellularLocation>
    <subcellularLocation>
        <location evidence="1">Nucleus</location>
    </subcellularLocation>
</comment>
<comment type="tissue specificity">
    <text evidence="5">Mainly expressed in trichomes, roots and flowers, and, to a lower extent, in leaves and stems.</text>
</comment>
<comment type="similarity">
    <text evidence="7">Belongs to the FPP/GGPP synthase family.</text>
</comment>
<comment type="sequence caution" evidence="7">
    <conflict type="erroneous gene model prediction"/>
</comment>
<comment type="sequence caution" evidence="7">
    <conflict type="erroneous gene model prediction"/>
</comment>
<protein>
    <recommendedName>
        <fullName evidence="6">Farnesyl pyrophosphate synthase 2</fullName>
        <shortName evidence="6">CsFPPS2</shortName>
        <shortName evidence="6">FPP synthase 2</shortName>
        <ecNumber evidence="3">2.5.1.10</ecNumber>
    </recommendedName>
    <alternativeName>
        <fullName evidence="7">(2E,6E)-farnesyl diphosphate synthase</fullName>
    </alternativeName>
    <alternativeName>
        <fullName evidence="7">Dimethylallyltranstransferase</fullName>
        <ecNumber evidence="3">2.5.1.1</ecNumber>
    </alternativeName>
    <alternativeName>
        <fullName evidence="7">Farnesyl diphosphate synthase</fullName>
    </alternativeName>
    <alternativeName>
        <fullName evidence="7">Geranyltranstransferase</fullName>
    </alternativeName>
</protein>
<reference key="1">
    <citation type="journal article" date="2017" name="PLoS ONE">
        <title>Terpene synthases from Cannabis sativa.</title>
        <authorList>
            <person name="Booth J.K."/>
            <person name="Page J.E."/>
            <person name="Bohlmann J."/>
        </authorList>
    </citation>
    <scope>NUCLEOTIDE SEQUENCE [MRNA]</scope>
    <scope>TISSUE SPECIFICITY</scope>
    <source>
        <strain>cv. Finola</strain>
        <strain>cv. Purple Kush TPS13</strain>
    </source>
</reference>
<reference key="2">
    <citation type="submission" date="2020-03" db="EMBL/GenBank/DDBJ databases">
        <title>Sequence and annotation of 42 cannabis genomes reveals extensive copy number variation in cannabinoid synthesis and pathogen resistance genes.</title>
        <authorList>
            <person name="Mckernan K.J."/>
            <person name="Helbert Y."/>
            <person name="Kane L.T."/>
            <person name="Ebling H."/>
            <person name="Zhang L."/>
            <person name="Liu B."/>
            <person name="Eaton Z."/>
            <person name="Mclaughlin S."/>
            <person name="Kingan S."/>
            <person name="Baybayan P."/>
            <person name="Concepcion G."/>
            <person name="Jordan M."/>
            <person name="Riva A."/>
            <person name="Barbazuk W."/>
            <person name="Harkins T."/>
        </authorList>
    </citation>
    <scope>NUCLEOTIDE SEQUENCE [LARGE SCALE GENOMIC DNA]</scope>
    <source>
        <strain>cv. Jamaican Lion 4</strain>
        <tissue>Leaf</tissue>
    </source>
</reference>
<accession>A0A1V0QSH7</accession>
<accession>A0A7J6EXE4</accession>
<accession>A0A7J6H7T3</accession>
<accession>A0A803QBT5</accession>
<feature type="chain" id="PRO_0000460893" description="Farnesyl pyrophosphate synthase 2">
    <location>
        <begin position="1"/>
        <end position="341"/>
    </location>
</feature>
<feature type="binding site" evidence="2">
    <location>
        <position position="46"/>
    </location>
    <ligand>
        <name>isopentenyl diphosphate</name>
        <dbReference type="ChEBI" id="CHEBI:128769"/>
    </ligand>
</feature>
<feature type="binding site" evidence="2">
    <location>
        <position position="49"/>
    </location>
    <ligand>
        <name>isopentenyl diphosphate</name>
        <dbReference type="ChEBI" id="CHEBI:128769"/>
    </ligand>
</feature>
<feature type="binding site" evidence="2">
    <location>
        <position position="85"/>
    </location>
    <ligand>
        <name>isopentenyl diphosphate</name>
        <dbReference type="ChEBI" id="CHEBI:128769"/>
    </ligand>
</feature>
<feature type="binding site" evidence="2">
    <location>
        <position position="92"/>
    </location>
    <ligand>
        <name>Mg(2+)</name>
        <dbReference type="ChEBI" id="CHEBI:18420"/>
        <label>1</label>
    </ligand>
</feature>
<feature type="binding site" evidence="2">
    <location>
        <position position="92"/>
    </location>
    <ligand>
        <name>Mg(2+)</name>
        <dbReference type="ChEBI" id="CHEBI:18420"/>
        <label>2</label>
    </ligand>
</feature>
<feature type="binding site" evidence="2">
    <location>
        <position position="96"/>
    </location>
    <ligand>
        <name>Mg(2+)</name>
        <dbReference type="ChEBI" id="CHEBI:18420"/>
        <label>1</label>
    </ligand>
</feature>
<feature type="binding site" evidence="2">
    <location>
        <position position="96"/>
    </location>
    <ligand>
        <name>Mg(2+)</name>
        <dbReference type="ChEBI" id="CHEBI:18420"/>
        <label>2</label>
    </ligand>
</feature>
<feature type="binding site" evidence="4">
    <location>
        <position position="101"/>
    </location>
    <ligand>
        <name>dimethylallyl diphosphate</name>
        <dbReference type="ChEBI" id="CHEBI:57623"/>
    </ligand>
</feature>
<feature type="binding site" evidence="2">
    <location>
        <position position="102"/>
    </location>
    <ligand>
        <name>isopentenyl diphosphate</name>
        <dbReference type="ChEBI" id="CHEBI:128769"/>
    </ligand>
</feature>
<feature type="binding site" evidence="4">
    <location>
        <position position="189"/>
    </location>
    <ligand>
        <name>dimethylallyl diphosphate</name>
        <dbReference type="ChEBI" id="CHEBI:57623"/>
    </ligand>
</feature>
<feature type="binding site" evidence="4">
    <location>
        <position position="190"/>
    </location>
    <ligand>
        <name>dimethylallyl diphosphate</name>
        <dbReference type="ChEBI" id="CHEBI:57623"/>
    </ligand>
</feature>
<feature type="binding site" evidence="4">
    <location>
        <position position="228"/>
    </location>
    <ligand>
        <name>dimethylallyl diphosphate</name>
        <dbReference type="ChEBI" id="CHEBI:57623"/>
    </ligand>
</feature>
<feature type="binding site" evidence="4">
    <location>
        <position position="245"/>
    </location>
    <ligand>
        <name>dimethylallyl diphosphate</name>
        <dbReference type="ChEBI" id="CHEBI:57623"/>
    </ligand>
</feature>
<feature type="binding site" evidence="4">
    <location>
        <position position="254"/>
    </location>
    <ligand>
        <name>dimethylallyl diphosphate</name>
        <dbReference type="ChEBI" id="CHEBI:57623"/>
    </ligand>
</feature>
<feature type="sequence conflict" description="In Ref. 1; ARE72275." evidence="7" ref="1">
    <original>Y</original>
    <variation>S</variation>
    <location>
        <position position="12"/>
    </location>
</feature>
<feature type="sequence conflict" description="In Ref. 1; ARE72275." evidence="7" ref="1">
    <original>N</original>
    <variation>K</variation>
    <location>
        <position position="20"/>
    </location>
</feature>
<feature type="sequence conflict" description="In Ref. 1; ARE72275." evidence="7" ref="1">
    <original>E</original>
    <variation>S</variation>
    <location>
        <position position="35"/>
    </location>
</feature>
<name>FPPS2_CANSA</name>
<keyword id="KW-0152">Cholesterol biosynthesis</keyword>
<keyword id="KW-0153">Cholesterol metabolism</keyword>
<keyword id="KW-0963">Cytoplasm</keyword>
<keyword id="KW-0414">Isoprene biosynthesis</keyword>
<keyword id="KW-0444">Lipid biosynthesis</keyword>
<keyword id="KW-0443">Lipid metabolism</keyword>
<keyword id="KW-0460">Magnesium</keyword>
<keyword id="KW-0479">Metal-binding</keyword>
<keyword id="KW-0539">Nucleus</keyword>
<keyword id="KW-1185">Reference proteome</keyword>
<keyword id="KW-0752">Steroid biosynthesis</keyword>
<keyword id="KW-0753">Steroid metabolism</keyword>
<keyword id="KW-0756">Sterol biosynthesis</keyword>
<keyword id="KW-1207">Sterol metabolism</keyword>
<keyword id="KW-0808">Transferase</keyword>
<gene>
    <name evidence="6" type="primary">FPPS2</name>
    <name evidence="8" type="ORF">F8388_008233</name>
    <name evidence="9" type="ORF">G4B88_016657</name>
</gene>
<sequence>MDLKSKFMEVYYKLKSELLNDPAFEFTDDSRQWVEQMLDYNVPGGKLNRGLSVIDSYQILKGGKELTEEEIFLTSALGWCIEWLQAYFLVLDDIMDNSVTRRGQPCWFRVPKVGLIAANDGILLRNHIPRILKKHFKGKSYYVDLLDLFNEVEFQTASGQMIDLITTIEGEKDLSKYSIPLHHRIVQYKTAYYSFYLPVACALVMAGENLDNHVDVKNILIEMGTYFQVQDDYLDCFGHPDVIGKIGTDIEDFKCSWLVVKALEIVTDEQKKLLFEHYGKADEASVKKVKELYKTLDLEGVFADYESTSYQKLNKSIEAHPKKEVQAVLKSFLAKIYKRQK</sequence>
<evidence type="ECO:0000250" key="1">
    <source>
        <dbReference type="UniProtKB" id="O14230"/>
    </source>
</evidence>
<evidence type="ECO:0000250" key="2">
    <source>
        <dbReference type="UniProtKB" id="P14324"/>
    </source>
</evidence>
<evidence type="ECO:0000250" key="3">
    <source>
        <dbReference type="UniProtKB" id="P49350"/>
    </source>
</evidence>
<evidence type="ECO:0000250" key="4">
    <source>
        <dbReference type="UniProtKB" id="Q12051"/>
    </source>
</evidence>
<evidence type="ECO:0000269" key="5">
    <source>
    </source>
</evidence>
<evidence type="ECO:0000303" key="6">
    <source>
    </source>
</evidence>
<evidence type="ECO:0000305" key="7"/>
<evidence type="ECO:0000312" key="8">
    <source>
        <dbReference type="EMBL" id="KAF4362349.1"/>
    </source>
</evidence>
<evidence type="ECO:0000312" key="9">
    <source>
        <dbReference type="EMBL" id="KAF4391347.1"/>
    </source>
</evidence>
<organism>
    <name type="scientific">Cannabis sativa</name>
    <name type="common">Hemp</name>
    <name type="synonym">Marijuana</name>
    <dbReference type="NCBI Taxonomy" id="3483"/>
    <lineage>
        <taxon>Eukaryota</taxon>
        <taxon>Viridiplantae</taxon>
        <taxon>Streptophyta</taxon>
        <taxon>Embryophyta</taxon>
        <taxon>Tracheophyta</taxon>
        <taxon>Spermatophyta</taxon>
        <taxon>Magnoliopsida</taxon>
        <taxon>eudicotyledons</taxon>
        <taxon>Gunneridae</taxon>
        <taxon>Pentapetalae</taxon>
        <taxon>rosids</taxon>
        <taxon>fabids</taxon>
        <taxon>Rosales</taxon>
        <taxon>Cannabaceae</taxon>
        <taxon>Cannabis</taxon>
    </lineage>
</organism>
<proteinExistence type="evidence at transcript level"/>